<name>UBP36_DROGR</name>
<feature type="chain" id="PRO_0000378497" description="Ubiquitin carboxyl-terminal hydrolase 36">
    <location>
        <begin position="1"/>
        <end position="1240"/>
    </location>
</feature>
<feature type="domain" description="USP">
    <location>
        <begin position="202"/>
        <end position="512"/>
    </location>
</feature>
<feature type="region of interest" description="Disordered" evidence="5">
    <location>
        <begin position="37"/>
        <end position="56"/>
    </location>
</feature>
<feature type="region of interest" description="Disordered" evidence="5">
    <location>
        <begin position="100"/>
        <end position="144"/>
    </location>
</feature>
<feature type="region of interest" description="Disordered" evidence="5">
    <location>
        <begin position="637"/>
        <end position="705"/>
    </location>
</feature>
<feature type="region of interest" description="Disordered" evidence="5">
    <location>
        <begin position="723"/>
        <end position="818"/>
    </location>
</feature>
<feature type="region of interest" description="Disordered" evidence="5">
    <location>
        <begin position="831"/>
        <end position="998"/>
    </location>
</feature>
<feature type="region of interest" description="Disordered" evidence="5">
    <location>
        <begin position="1076"/>
        <end position="1163"/>
    </location>
</feature>
<feature type="region of interest" description="Disordered" evidence="5">
    <location>
        <begin position="1198"/>
        <end position="1240"/>
    </location>
</feature>
<feature type="compositionally biased region" description="Low complexity" evidence="5">
    <location>
        <begin position="47"/>
        <end position="56"/>
    </location>
</feature>
<feature type="compositionally biased region" description="Low complexity" evidence="5">
    <location>
        <begin position="101"/>
        <end position="132"/>
    </location>
</feature>
<feature type="compositionally biased region" description="Polar residues" evidence="5">
    <location>
        <begin position="639"/>
        <end position="649"/>
    </location>
</feature>
<feature type="compositionally biased region" description="Low complexity" evidence="5">
    <location>
        <begin position="650"/>
        <end position="662"/>
    </location>
</feature>
<feature type="compositionally biased region" description="Acidic residues" evidence="5">
    <location>
        <begin position="668"/>
        <end position="680"/>
    </location>
</feature>
<feature type="compositionally biased region" description="Low complexity" evidence="5">
    <location>
        <begin position="733"/>
        <end position="744"/>
    </location>
</feature>
<feature type="compositionally biased region" description="Acidic residues" evidence="5">
    <location>
        <begin position="759"/>
        <end position="769"/>
    </location>
</feature>
<feature type="compositionally biased region" description="Low complexity" evidence="5">
    <location>
        <begin position="794"/>
        <end position="815"/>
    </location>
</feature>
<feature type="compositionally biased region" description="Acidic residues" evidence="5">
    <location>
        <begin position="843"/>
        <end position="859"/>
    </location>
</feature>
<feature type="compositionally biased region" description="Low complexity" evidence="5">
    <location>
        <begin position="869"/>
        <end position="879"/>
    </location>
</feature>
<feature type="compositionally biased region" description="Polar residues" evidence="5">
    <location>
        <begin position="880"/>
        <end position="890"/>
    </location>
</feature>
<feature type="compositionally biased region" description="Acidic residues" evidence="5">
    <location>
        <begin position="918"/>
        <end position="941"/>
    </location>
</feature>
<feature type="compositionally biased region" description="Polar residues" evidence="5">
    <location>
        <begin position="976"/>
        <end position="988"/>
    </location>
</feature>
<feature type="compositionally biased region" description="Low complexity" evidence="5">
    <location>
        <begin position="1076"/>
        <end position="1103"/>
    </location>
</feature>
<feature type="compositionally biased region" description="Basic and acidic residues" evidence="5">
    <location>
        <begin position="1111"/>
        <end position="1120"/>
    </location>
</feature>
<feature type="compositionally biased region" description="Low complexity" evidence="5">
    <location>
        <begin position="1231"/>
        <end position="1240"/>
    </location>
</feature>
<feature type="active site" description="Nucleophile" evidence="3 4">
    <location>
        <position position="211"/>
    </location>
</feature>
<feature type="active site" description="Proton acceptor" evidence="3 4">
    <location>
        <position position="471"/>
    </location>
</feature>
<feature type="modified residue" description="Phosphothreonine" evidence="1">
    <location>
        <position position="715"/>
    </location>
</feature>
<feature type="modified residue" description="Phosphoserine" evidence="1">
    <location>
        <position position="725"/>
    </location>
</feature>
<feature type="modified residue" description="Phosphoserine" evidence="1">
    <location>
        <position position="727"/>
    </location>
</feature>
<feature type="modified residue" description="Phosphoserine" evidence="1">
    <location>
        <position position="895"/>
    </location>
</feature>
<feature type="modified residue" description="Phosphothreonine" evidence="1">
    <location>
        <position position="898"/>
    </location>
</feature>
<feature type="modified residue" description="Phosphoserine" evidence="1">
    <location>
        <position position="901"/>
    </location>
</feature>
<comment type="function">
    <text evidence="2">Required for maintaining multiple types of adult stem cells, including male and female germline, epithelial follicle cell and intestinal stem cells. May function as a transcriptional repressor by continually deubiquiting histone H2B at the promoters of genes critical for cellular differentiation, thereby preventing histone H3 'Lys-4' trimethylation (H3K4). Controls selective autophagy activation by ubiquitinated proteins.</text>
</comment>
<comment type="catalytic activity">
    <reaction>
        <text>Thiol-dependent hydrolysis of ester, thioester, amide, peptide and isopeptide bonds formed by the C-terminal Gly of ubiquitin (a 76-residue protein attached to proteins as an intracellular targeting signal).</text>
        <dbReference type="EC" id="3.4.19.12"/>
    </reaction>
</comment>
<comment type="subunit">
    <text evidence="1">Interacts with atms/PAF1, but not with CycT.</text>
</comment>
<comment type="subcellular location">
    <subcellularLocation>
        <location evidence="1">Nucleus</location>
        <location evidence="1">Nucleolus</location>
    </subcellularLocation>
</comment>
<comment type="similarity">
    <text evidence="6">Belongs to the peptidase C19 family.</text>
</comment>
<sequence length="1240" mass="134998">MPVSLAVCETTANVVNAALRESLGSCVARAALSADEAKTSNGGGDGSSTSGSSTDNLQSQIVANAKRVLLAKIDYEEVDNYHESVLAKLKSKYIVIKPDSNGGAASNGNGNYNGSNKTNGKFGAGNGHDNNGNGNGIVNGGTSALNGGNNRKQIVVVDHQSSNQHGSPSNPNELPKPKRVLYQREHIRIGWKQSERKWQVGTGMLNVGNTCYLNSSLQALFHIPSLANWLVSESAHLENCNISESCGSNGCIICAMAKTLQSTQSNQSAVRPFLIYSKLRQICKHMVVGRQEDAHEFLRFLIEAMEKAYLMRFRNYKELDQLVKETTPLNQIFGGYLRSEVRCLSCNHVSITFQHFQDLLLDIRKSDTLEDAFDGYFSRERLEDMGYKCEGCKKKVSATKQFSLERAPITLCIQLKRFSMMGNKLTKQISFKPRIDLSRFAARSPTAAAQPLSYRLVSMVTHLGVSQHCGHYTAIGLTETGSYYNFDDSCVRPIAMQSVCNTNAYIMFYELDVNGNGHVVAPKMNGMRLTTNGGQQHSSPVVATAPAAVVSATATSTSASVSAAAVTSPRFIGPQLPNGYGNSNGHALGGGAAKTAIQFKTTPQKHQQQQQAQTQYQLNGHINGAAKFQTGAANANANKSSCNTLNNSKQHQPQQQQQQPQHILPISSDEEEDSDDDNDNDNVKTNKAPQLPSMPKMFEESSESVALTAKLKPKTALKSLVPYESASEEEEQQQQQQQQTLQQQAATNSRKRRSGADSSDTDDDDDEEQQQQQQQQPSLILRNGHAKTNGNLLNSSSSKTKSASNASSANVNSSKQKTDAIDEIFKSLNNYKNKHRNDHNHVDDDDDDDEDEDEDEDEAQAQAEKKTVTKSSSSSSSTSLTNGWQQSQNGKATASPKTPPSPAVIKTKTGIWQVTRNDEDDDENVDGVADADDDDDNDEVAEPAVVTAKNHKNPFAAGKATATTDANPSAKRQKLLNGSSKSQQTTPRIGNGYQGESLPNGNAVVSELLKQNHRGYGSSVLSWNGKASELDKETFDLVCAKRIAGYGAAAADEHCCDVNSGHSSNYGTNYKSLNNDMSSSSSSSSSTNSSSNSSSRSNGNSSNCPPCDLLAEAREQRKRDDDDEEENEMDRGRQRKIKSASVKCGSGATAAPPGYNPFQEYESQKRWHSNKSGSYSRFYHHPNYRSNFQQRNKFKHNRFAGGGGGAKFQQQRALQRHLASGGGFTRRQHHQSSGQQQQQS</sequence>
<keyword id="KW-0378">Hydrolase</keyword>
<keyword id="KW-0539">Nucleus</keyword>
<keyword id="KW-0597">Phosphoprotein</keyword>
<keyword id="KW-0645">Protease</keyword>
<keyword id="KW-1185">Reference proteome</keyword>
<keyword id="KW-0788">Thiol protease</keyword>
<keyword id="KW-0833">Ubl conjugation pathway</keyword>
<accession>B4IXE0</accession>
<dbReference type="EC" id="3.4.19.12"/>
<dbReference type="EMBL" id="CH916366">
    <property type="protein sequence ID" value="EDV96377.1"/>
    <property type="molecule type" value="Genomic_DNA"/>
</dbReference>
<dbReference type="RefSeq" id="XP_001984029.1">
    <property type="nucleotide sequence ID" value="XM_001983993.1"/>
</dbReference>
<dbReference type="SMR" id="B4IXE0"/>
<dbReference type="FunCoup" id="B4IXE0">
    <property type="interactions" value="525"/>
</dbReference>
<dbReference type="STRING" id="7222.B4IXE0"/>
<dbReference type="eggNOG" id="KOG1865">
    <property type="taxonomic scope" value="Eukaryota"/>
</dbReference>
<dbReference type="HOGENOM" id="CLU_006208_0_0_1"/>
<dbReference type="InParanoid" id="B4IXE0"/>
<dbReference type="OMA" id="VCAMAKT"/>
<dbReference type="OrthoDB" id="420187at2759"/>
<dbReference type="PhylomeDB" id="B4IXE0"/>
<dbReference type="ChiTaRS" id="scny">
    <property type="organism name" value="fly"/>
</dbReference>
<dbReference type="Proteomes" id="UP000001070">
    <property type="component" value="Unassembled WGS sequence"/>
</dbReference>
<dbReference type="GO" id="GO:0005829">
    <property type="term" value="C:cytosol"/>
    <property type="evidence" value="ECO:0007669"/>
    <property type="project" value="TreeGrafter"/>
</dbReference>
<dbReference type="GO" id="GO:0005730">
    <property type="term" value="C:nucleolus"/>
    <property type="evidence" value="ECO:0000250"/>
    <property type="project" value="UniProtKB"/>
</dbReference>
<dbReference type="GO" id="GO:0004843">
    <property type="term" value="F:cysteine-type deubiquitinase activity"/>
    <property type="evidence" value="ECO:0000250"/>
    <property type="project" value="UniProtKB"/>
</dbReference>
<dbReference type="GO" id="GO:0030718">
    <property type="term" value="P:germ-line stem cell population maintenance"/>
    <property type="evidence" value="ECO:0000250"/>
    <property type="project" value="UniProtKB"/>
</dbReference>
<dbReference type="GO" id="GO:0016242">
    <property type="term" value="P:negative regulation of macroautophagy"/>
    <property type="evidence" value="ECO:0000250"/>
    <property type="project" value="UniProtKB"/>
</dbReference>
<dbReference type="GO" id="GO:0016579">
    <property type="term" value="P:protein deubiquitination"/>
    <property type="evidence" value="ECO:0000250"/>
    <property type="project" value="UniProtKB"/>
</dbReference>
<dbReference type="GO" id="GO:0006508">
    <property type="term" value="P:proteolysis"/>
    <property type="evidence" value="ECO:0007669"/>
    <property type="project" value="UniProtKB-KW"/>
</dbReference>
<dbReference type="GO" id="GO:0042981">
    <property type="term" value="P:regulation of apoptotic process"/>
    <property type="evidence" value="ECO:0007669"/>
    <property type="project" value="TreeGrafter"/>
</dbReference>
<dbReference type="GO" id="GO:0035019">
    <property type="term" value="P:somatic stem cell population maintenance"/>
    <property type="evidence" value="ECO:0000250"/>
    <property type="project" value="UniProtKB"/>
</dbReference>
<dbReference type="CDD" id="cd02661">
    <property type="entry name" value="Peptidase_C19E"/>
    <property type="match status" value="1"/>
</dbReference>
<dbReference type="FunFam" id="3.90.70.10:FF:000085">
    <property type="entry name" value="Ubiquitin carboxyl-terminal hydrolase 36"/>
    <property type="match status" value="1"/>
</dbReference>
<dbReference type="Gene3D" id="3.90.70.10">
    <property type="entry name" value="Cysteine proteinases"/>
    <property type="match status" value="1"/>
</dbReference>
<dbReference type="InterPro" id="IPR038765">
    <property type="entry name" value="Papain-like_cys_pep_sf"/>
</dbReference>
<dbReference type="InterPro" id="IPR050164">
    <property type="entry name" value="Peptidase_C19"/>
</dbReference>
<dbReference type="InterPro" id="IPR001394">
    <property type="entry name" value="Peptidase_C19_UCH"/>
</dbReference>
<dbReference type="InterPro" id="IPR018200">
    <property type="entry name" value="USP_CS"/>
</dbReference>
<dbReference type="InterPro" id="IPR028889">
    <property type="entry name" value="USP_dom"/>
</dbReference>
<dbReference type="PANTHER" id="PTHR24006">
    <property type="entry name" value="UBIQUITIN CARBOXYL-TERMINAL HYDROLASE"/>
    <property type="match status" value="1"/>
</dbReference>
<dbReference type="PANTHER" id="PTHR24006:SF758">
    <property type="entry name" value="UBIQUITIN CARBOXYL-TERMINAL HYDROLASE 36"/>
    <property type="match status" value="1"/>
</dbReference>
<dbReference type="Pfam" id="PF00443">
    <property type="entry name" value="UCH"/>
    <property type="match status" value="1"/>
</dbReference>
<dbReference type="SUPFAM" id="SSF54001">
    <property type="entry name" value="Cysteine proteinases"/>
    <property type="match status" value="1"/>
</dbReference>
<dbReference type="PROSITE" id="PS00972">
    <property type="entry name" value="USP_1"/>
    <property type="match status" value="1"/>
</dbReference>
<dbReference type="PROSITE" id="PS00973">
    <property type="entry name" value="USP_2"/>
    <property type="match status" value="1"/>
</dbReference>
<dbReference type="PROSITE" id="PS50235">
    <property type="entry name" value="USP_3"/>
    <property type="match status" value="1"/>
</dbReference>
<evidence type="ECO:0000250" key="1"/>
<evidence type="ECO:0000250" key="2">
    <source>
        <dbReference type="UniProtKB" id="Q9VRP5"/>
    </source>
</evidence>
<evidence type="ECO:0000255" key="3">
    <source>
        <dbReference type="PROSITE-ProRule" id="PRU10092"/>
    </source>
</evidence>
<evidence type="ECO:0000255" key="4">
    <source>
        <dbReference type="PROSITE-ProRule" id="PRU10093"/>
    </source>
</evidence>
<evidence type="ECO:0000256" key="5">
    <source>
        <dbReference type="SAM" id="MobiDB-lite"/>
    </source>
</evidence>
<evidence type="ECO:0000305" key="6"/>
<protein>
    <recommendedName>
        <fullName>Ubiquitin carboxyl-terminal hydrolase 36</fullName>
        <ecNumber>3.4.19.12</ecNumber>
    </recommendedName>
    <alternativeName>
        <fullName>Deubiquitinating enzyme 36</fullName>
    </alternativeName>
    <alternativeName>
        <fullName>Protein scrawny</fullName>
    </alternativeName>
    <alternativeName>
        <fullName>Ubiquitin thioesterase 36</fullName>
    </alternativeName>
    <alternativeName>
        <fullName>Ubiquitin-specific-processing protease 36</fullName>
    </alternativeName>
</protein>
<organism>
    <name type="scientific">Drosophila grimshawi</name>
    <name type="common">Hawaiian fruit fly</name>
    <name type="synonym">Idiomyia grimshawi</name>
    <dbReference type="NCBI Taxonomy" id="7222"/>
    <lineage>
        <taxon>Eukaryota</taxon>
        <taxon>Metazoa</taxon>
        <taxon>Ecdysozoa</taxon>
        <taxon>Arthropoda</taxon>
        <taxon>Hexapoda</taxon>
        <taxon>Insecta</taxon>
        <taxon>Pterygota</taxon>
        <taxon>Neoptera</taxon>
        <taxon>Endopterygota</taxon>
        <taxon>Diptera</taxon>
        <taxon>Brachycera</taxon>
        <taxon>Muscomorpha</taxon>
        <taxon>Ephydroidea</taxon>
        <taxon>Drosophilidae</taxon>
        <taxon>Drosophila</taxon>
        <taxon>Hawaiian Drosophila</taxon>
    </lineage>
</organism>
<proteinExistence type="inferred from homology"/>
<reference key="1">
    <citation type="journal article" date="2007" name="Nature">
        <title>Evolution of genes and genomes on the Drosophila phylogeny.</title>
        <authorList>
            <consortium name="Drosophila 12 genomes consortium"/>
        </authorList>
    </citation>
    <scope>NUCLEOTIDE SEQUENCE [LARGE SCALE GENOMIC DNA]</scope>
    <source>
        <strain>Tucson 15287-2541.00</strain>
    </source>
</reference>
<gene>
    <name type="primary">Usp36</name>
    <name type="synonym">scny</name>
    <name type="ORF">GH16215</name>
</gene>